<name>MOAA_STAAS</name>
<proteinExistence type="inferred from homology"/>
<gene>
    <name evidence="1" type="primary">moaA</name>
    <name type="ordered locus">SAS2158</name>
</gene>
<evidence type="ECO:0000255" key="1">
    <source>
        <dbReference type="HAMAP-Rule" id="MF_01225"/>
    </source>
</evidence>
<evidence type="ECO:0000255" key="2">
    <source>
        <dbReference type="PROSITE-ProRule" id="PRU01266"/>
    </source>
</evidence>
<protein>
    <recommendedName>
        <fullName evidence="1">GTP 3',8-cyclase</fullName>
        <ecNumber evidence="1">4.1.99.22</ecNumber>
    </recommendedName>
    <alternativeName>
        <fullName evidence="1">Molybdenum cofactor biosynthesis protein A</fullName>
    </alternativeName>
</protein>
<reference key="1">
    <citation type="journal article" date="2004" name="Proc. Natl. Acad. Sci. U.S.A.">
        <title>Complete genomes of two clinical Staphylococcus aureus strains: evidence for the rapid evolution of virulence and drug resistance.</title>
        <authorList>
            <person name="Holden M.T.G."/>
            <person name="Feil E.J."/>
            <person name="Lindsay J.A."/>
            <person name="Peacock S.J."/>
            <person name="Day N.P.J."/>
            <person name="Enright M.C."/>
            <person name="Foster T.J."/>
            <person name="Moore C.E."/>
            <person name="Hurst L."/>
            <person name="Atkin R."/>
            <person name="Barron A."/>
            <person name="Bason N."/>
            <person name="Bentley S.D."/>
            <person name="Chillingworth C."/>
            <person name="Chillingworth T."/>
            <person name="Churcher C."/>
            <person name="Clark L."/>
            <person name="Corton C."/>
            <person name="Cronin A."/>
            <person name="Doggett J."/>
            <person name="Dowd L."/>
            <person name="Feltwell T."/>
            <person name="Hance Z."/>
            <person name="Harris B."/>
            <person name="Hauser H."/>
            <person name="Holroyd S."/>
            <person name="Jagels K."/>
            <person name="James K.D."/>
            <person name="Lennard N."/>
            <person name="Line A."/>
            <person name="Mayes R."/>
            <person name="Moule S."/>
            <person name="Mungall K."/>
            <person name="Ormond D."/>
            <person name="Quail M.A."/>
            <person name="Rabbinowitsch E."/>
            <person name="Rutherford K.M."/>
            <person name="Sanders M."/>
            <person name="Sharp S."/>
            <person name="Simmonds M."/>
            <person name="Stevens K."/>
            <person name="Whitehead S."/>
            <person name="Barrell B.G."/>
            <person name="Spratt B.G."/>
            <person name="Parkhill J."/>
        </authorList>
    </citation>
    <scope>NUCLEOTIDE SEQUENCE [LARGE SCALE GENOMIC DNA]</scope>
    <source>
        <strain>MSSA476</strain>
    </source>
</reference>
<dbReference type="EC" id="4.1.99.22" evidence="1"/>
<dbReference type="EMBL" id="BX571857">
    <property type="protein sequence ID" value="CAG43969.1"/>
    <property type="molecule type" value="Genomic_DNA"/>
</dbReference>
<dbReference type="RefSeq" id="WP_000230173.1">
    <property type="nucleotide sequence ID" value="NC_002953.3"/>
</dbReference>
<dbReference type="SMR" id="Q6G754"/>
<dbReference type="KEGG" id="sas:SAS2158"/>
<dbReference type="HOGENOM" id="CLU_009273_0_1_9"/>
<dbReference type="UniPathway" id="UPA00344"/>
<dbReference type="GO" id="GO:0051539">
    <property type="term" value="F:4 iron, 4 sulfur cluster binding"/>
    <property type="evidence" value="ECO:0007669"/>
    <property type="project" value="UniProtKB-UniRule"/>
</dbReference>
<dbReference type="GO" id="GO:0061799">
    <property type="term" value="F:cyclic pyranopterin monophosphate synthase activity"/>
    <property type="evidence" value="ECO:0007669"/>
    <property type="project" value="TreeGrafter"/>
</dbReference>
<dbReference type="GO" id="GO:0061798">
    <property type="term" value="F:GTP 3',8'-cyclase activity"/>
    <property type="evidence" value="ECO:0007669"/>
    <property type="project" value="UniProtKB-UniRule"/>
</dbReference>
<dbReference type="GO" id="GO:0005525">
    <property type="term" value="F:GTP binding"/>
    <property type="evidence" value="ECO:0007669"/>
    <property type="project" value="UniProtKB-UniRule"/>
</dbReference>
<dbReference type="GO" id="GO:0046872">
    <property type="term" value="F:metal ion binding"/>
    <property type="evidence" value="ECO:0007669"/>
    <property type="project" value="UniProtKB-KW"/>
</dbReference>
<dbReference type="GO" id="GO:1904047">
    <property type="term" value="F:S-adenosyl-L-methionine binding"/>
    <property type="evidence" value="ECO:0007669"/>
    <property type="project" value="UniProtKB-UniRule"/>
</dbReference>
<dbReference type="GO" id="GO:0006777">
    <property type="term" value="P:Mo-molybdopterin cofactor biosynthetic process"/>
    <property type="evidence" value="ECO:0007669"/>
    <property type="project" value="UniProtKB-UniRule"/>
</dbReference>
<dbReference type="CDD" id="cd01335">
    <property type="entry name" value="Radical_SAM"/>
    <property type="match status" value="1"/>
</dbReference>
<dbReference type="CDD" id="cd21117">
    <property type="entry name" value="Twitch_MoaA"/>
    <property type="match status" value="1"/>
</dbReference>
<dbReference type="Gene3D" id="3.20.20.70">
    <property type="entry name" value="Aldolase class I"/>
    <property type="match status" value="1"/>
</dbReference>
<dbReference type="HAMAP" id="MF_01225_B">
    <property type="entry name" value="MoaA_B"/>
    <property type="match status" value="1"/>
</dbReference>
<dbReference type="InterPro" id="IPR013785">
    <property type="entry name" value="Aldolase_TIM"/>
</dbReference>
<dbReference type="InterPro" id="IPR006638">
    <property type="entry name" value="Elp3/MiaA/NifB-like_rSAM"/>
</dbReference>
<dbReference type="InterPro" id="IPR013483">
    <property type="entry name" value="MoaA"/>
</dbReference>
<dbReference type="InterPro" id="IPR000385">
    <property type="entry name" value="MoaA_NifB_PqqE_Fe-S-bd_CS"/>
</dbReference>
<dbReference type="InterPro" id="IPR010505">
    <property type="entry name" value="MoaA_twitch"/>
</dbReference>
<dbReference type="InterPro" id="IPR050105">
    <property type="entry name" value="MoCo_biosynth_MoaA/MoaC"/>
</dbReference>
<dbReference type="InterPro" id="IPR007197">
    <property type="entry name" value="rSAM"/>
</dbReference>
<dbReference type="NCBIfam" id="TIGR02666">
    <property type="entry name" value="moaA"/>
    <property type="match status" value="1"/>
</dbReference>
<dbReference type="PANTHER" id="PTHR22960:SF0">
    <property type="entry name" value="MOLYBDENUM COFACTOR BIOSYNTHESIS PROTEIN 1"/>
    <property type="match status" value="1"/>
</dbReference>
<dbReference type="PANTHER" id="PTHR22960">
    <property type="entry name" value="MOLYBDOPTERIN COFACTOR SYNTHESIS PROTEIN A"/>
    <property type="match status" value="1"/>
</dbReference>
<dbReference type="Pfam" id="PF06463">
    <property type="entry name" value="Mob_synth_C"/>
    <property type="match status" value="1"/>
</dbReference>
<dbReference type="Pfam" id="PF04055">
    <property type="entry name" value="Radical_SAM"/>
    <property type="match status" value="1"/>
</dbReference>
<dbReference type="SFLD" id="SFLDF00276">
    <property type="entry name" value="cyclic_pyranopterin_phosphate"/>
    <property type="match status" value="1"/>
</dbReference>
<dbReference type="SFLD" id="SFLDG01216">
    <property type="entry name" value="thioether_bond_formation_requi"/>
    <property type="match status" value="1"/>
</dbReference>
<dbReference type="SMART" id="SM00729">
    <property type="entry name" value="Elp3"/>
    <property type="match status" value="1"/>
</dbReference>
<dbReference type="SUPFAM" id="SSF102114">
    <property type="entry name" value="Radical SAM enzymes"/>
    <property type="match status" value="1"/>
</dbReference>
<dbReference type="PROSITE" id="PS01305">
    <property type="entry name" value="MOAA_NIFB_PQQE"/>
    <property type="match status" value="1"/>
</dbReference>
<dbReference type="PROSITE" id="PS51918">
    <property type="entry name" value="RADICAL_SAM"/>
    <property type="match status" value="1"/>
</dbReference>
<keyword id="KW-0004">4Fe-4S</keyword>
<keyword id="KW-0342">GTP-binding</keyword>
<keyword id="KW-0408">Iron</keyword>
<keyword id="KW-0411">Iron-sulfur</keyword>
<keyword id="KW-0456">Lyase</keyword>
<keyword id="KW-0479">Metal-binding</keyword>
<keyword id="KW-0501">Molybdenum cofactor biosynthesis</keyword>
<keyword id="KW-0547">Nucleotide-binding</keyword>
<keyword id="KW-0949">S-adenosyl-L-methionine</keyword>
<accession>Q6G754</accession>
<comment type="function">
    <text evidence="1">Catalyzes the cyclization of GTP to (8S)-3',8-cyclo-7,8-dihydroguanosine 5'-triphosphate.</text>
</comment>
<comment type="catalytic activity">
    <reaction evidence="1">
        <text>GTP + AH2 + S-adenosyl-L-methionine = (8S)-3',8-cyclo-7,8-dihydroguanosine 5'-triphosphate + 5'-deoxyadenosine + L-methionine + A + H(+)</text>
        <dbReference type="Rhea" id="RHEA:49576"/>
        <dbReference type="ChEBI" id="CHEBI:13193"/>
        <dbReference type="ChEBI" id="CHEBI:15378"/>
        <dbReference type="ChEBI" id="CHEBI:17319"/>
        <dbReference type="ChEBI" id="CHEBI:17499"/>
        <dbReference type="ChEBI" id="CHEBI:37565"/>
        <dbReference type="ChEBI" id="CHEBI:57844"/>
        <dbReference type="ChEBI" id="CHEBI:59789"/>
        <dbReference type="ChEBI" id="CHEBI:131766"/>
        <dbReference type="EC" id="4.1.99.22"/>
    </reaction>
</comment>
<comment type="cofactor">
    <cofactor evidence="1">
        <name>[4Fe-4S] cluster</name>
        <dbReference type="ChEBI" id="CHEBI:49883"/>
    </cofactor>
    <text evidence="1">Binds 2 [4Fe-4S] clusters. Binds 1 [4Fe-4S] cluster coordinated with 3 cysteines and an exchangeable S-adenosyl-L-methionine and 1 [4Fe-4S] cluster coordinated with 3 cysteines and the GTP-derived substrate.</text>
</comment>
<comment type="pathway">
    <text evidence="1">Cofactor biosynthesis; molybdopterin biosynthesis.</text>
</comment>
<comment type="subunit">
    <text evidence="1">Monomer and homodimer.</text>
</comment>
<comment type="similarity">
    <text evidence="1">Belongs to the radical SAM superfamily. MoaA family.</text>
</comment>
<organism>
    <name type="scientific">Staphylococcus aureus (strain MSSA476)</name>
    <dbReference type="NCBI Taxonomy" id="282459"/>
    <lineage>
        <taxon>Bacteria</taxon>
        <taxon>Bacillati</taxon>
        <taxon>Bacillota</taxon>
        <taxon>Bacilli</taxon>
        <taxon>Bacillales</taxon>
        <taxon>Staphylococcaceae</taxon>
        <taxon>Staphylococcus</taxon>
    </lineage>
</organism>
<sequence>MVEQIKDKLGRPIRDLRLSVTDRCNFRCDYCMPKEVFGDDFVFLPKNELLTFDEMARIAKVYAELGVKKIRITGGEPLMRRDLDVLIAKLNQIDGIEDIGLTTNGLLLKKHGQKLYDAGLRRINVSLDAIDDTLFQSINNRNIKATTILEQIDYATSIGLNVKVNVVIQKGINDDQIIPMLEYFKDKHIEIRFIEFMDVGNDNGWDFSKVVTKDEMLTMIEQHFEIDPVEPKYFGEVAKYYRHKDNGVQFGLITSVSQSFCSTCTRARLSSDGKFYGCLFATVDGFNVKAFIRSGVTDEELKEQFKALWQIRDDRYSDERTAQTVANRQRKKINMNYIGG</sequence>
<feature type="chain" id="PRO_0000152994" description="GTP 3',8-cyclase">
    <location>
        <begin position="1"/>
        <end position="340"/>
    </location>
</feature>
<feature type="domain" description="Radical SAM core" evidence="2">
    <location>
        <begin position="8"/>
        <end position="227"/>
    </location>
</feature>
<feature type="binding site" evidence="1">
    <location>
        <position position="17"/>
    </location>
    <ligand>
        <name>GTP</name>
        <dbReference type="ChEBI" id="CHEBI:37565"/>
    </ligand>
</feature>
<feature type="binding site" evidence="1">
    <location>
        <position position="24"/>
    </location>
    <ligand>
        <name>[4Fe-4S] cluster</name>
        <dbReference type="ChEBI" id="CHEBI:49883"/>
        <label>1</label>
        <note>4Fe-4S-S-AdoMet</note>
    </ligand>
</feature>
<feature type="binding site" evidence="1">
    <location>
        <position position="28"/>
    </location>
    <ligand>
        <name>[4Fe-4S] cluster</name>
        <dbReference type="ChEBI" id="CHEBI:49883"/>
        <label>1</label>
        <note>4Fe-4S-S-AdoMet</note>
    </ligand>
</feature>
<feature type="binding site" evidence="1">
    <location>
        <position position="30"/>
    </location>
    <ligand>
        <name>S-adenosyl-L-methionine</name>
        <dbReference type="ChEBI" id="CHEBI:59789"/>
    </ligand>
</feature>
<feature type="binding site" evidence="1">
    <location>
        <position position="31"/>
    </location>
    <ligand>
        <name>[4Fe-4S] cluster</name>
        <dbReference type="ChEBI" id="CHEBI:49883"/>
        <label>1</label>
        <note>4Fe-4S-S-AdoMet</note>
    </ligand>
</feature>
<feature type="binding site" evidence="1">
    <location>
        <position position="71"/>
    </location>
    <ligand>
        <name>GTP</name>
        <dbReference type="ChEBI" id="CHEBI:37565"/>
    </ligand>
</feature>
<feature type="binding site" evidence="1">
    <location>
        <position position="75"/>
    </location>
    <ligand>
        <name>S-adenosyl-L-methionine</name>
        <dbReference type="ChEBI" id="CHEBI:59789"/>
    </ligand>
</feature>
<feature type="binding site" evidence="1">
    <location>
        <position position="102"/>
    </location>
    <ligand>
        <name>GTP</name>
        <dbReference type="ChEBI" id="CHEBI:37565"/>
    </ligand>
</feature>
<feature type="binding site" evidence="1">
    <location>
        <position position="126"/>
    </location>
    <ligand>
        <name>S-adenosyl-L-methionine</name>
        <dbReference type="ChEBI" id="CHEBI:59789"/>
    </ligand>
</feature>
<feature type="binding site" evidence="1">
    <location>
        <position position="163"/>
    </location>
    <ligand>
        <name>GTP</name>
        <dbReference type="ChEBI" id="CHEBI:37565"/>
    </ligand>
</feature>
<feature type="binding site" evidence="1">
    <location>
        <position position="197"/>
    </location>
    <ligand>
        <name>S-adenosyl-L-methionine</name>
        <dbReference type="ChEBI" id="CHEBI:59789"/>
    </ligand>
</feature>
<feature type="binding site" evidence="1">
    <location>
        <position position="261"/>
    </location>
    <ligand>
        <name>[4Fe-4S] cluster</name>
        <dbReference type="ChEBI" id="CHEBI:49883"/>
        <label>2</label>
        <note>4Fe-4S-substrate</note>
    </ligand>
</feature>
<feature type="binding site" evidence="1">
    <location>
        <position position="264"/>
    </location>
    <ligand>
        <name>[4Fe-4S] cluster</name>
        <dbReference type="ChEBI" id="CHEBI:49883"/>
        <label>2</label>
        <note>4Fe-4S-substrate</note>
    </ligand>
</feature>
<feature type="binding site" evidence="1">
    <location>
        <begin position="266"/>
        <end position="268"/>
    </location>
    <ligand>
        <name>GTP</name>
        <dbReference type="ChEBI" id="CHEBI:37565"/>
    </ligand>
</feature>
<feature type="binding site" evidence="1">
    <location>
        <position position="278"/>
    </location>
    <ligand>
        <name>[4Fe-4S] cluster</name>
        <dbReference type="ChEBI" id="CHEBI:49883"/>
        <label>2</label>
        <note>4Fe-4S-substrate</note>
    </ligand>
</feature>